<protein>
    <recommendedName>
        <fullName evidence="2">Mannitol-1-phosphate 5-dehydrogenase</fullName>
        <ecNumber evidence="2">1.1.1.17</ecNumber>
    </recommendedName>
</protein>
<comment type="catalytic activity">
    <reaction evidence="2">
        <text>D-mannitol 1-phosphate + NAD(+) = beta-D-fructose 6-phosphate + NADH + H(+)</text>
        <dbReference type="Rhea" id="RHEA:19661"/>
        <dbReference type="ChEBI" id="CHEBI:15378"/>
        <dbReference type="ChEBI" id="CHEBI:57540"/>
        <dbReference type="ChEBI" id="CHEBI:57634"/>
        <dbReference type="ChEBI" id="CHEBI:57945"/>
        <dbReference type="ChEBI" id="CHEBI:61381"/>
        <dbReference type="EC" id="1.1.1.17"/>
    </reaction>
</comment>
<comment type="subunit">
    <text evidence="1">Monomer.</text>
</comment>
<comment type="similarity">
    <text evidence="2">Belongs to the mannitol dehydrogenase family.</text>
</comment>
<proteinExistence type="inferred from homology"/>
<gene>
    <name evidence="2" type="primary">mtlD</name>
    <name type="ordered locus">Z5024</name>
    <name type="ordered locus">ECs4476</name>
</gene>
<feature type="chain" id="PRO_0000170705" description="Mannitol-1-phosphate 5-dehydrogenase">
    <location>
        <begin position="1"/>
        <end position="382"/>
    </location>
</feature>
<feature type="binding site" evidence="2">
    <location>
        <begin position="3"/>
        <end position="14"/>
    </location>
    <ligand>
        <name>NAD(+)</name>
        <dbReference type="ChEBI" id="CHEBI:57540"/>
    </ligand>
</feature>
<feature type="modified residue" description="N6-acetyllysine" evidence="2">
    <location>
        <position position="269"/>
    </location>
</feature>
<evidence type="ECO:0000250" key="1"/>
<evidence type="ECO:0000255" key="2">
    <source>
        <dbReference type="HAMAP-Rule" id="MF_00196"/>
    </source>
</evidence>
<keyword id="KW-0007">Acetylation</keyword>
<keyword id="KW-0520">NAD</keyword>
<keyword id="KW-0560">Oxidoreductase</keyword>
<keyword id="KW-1185">Reference proteome</keyword>
<name>MTLD_ECO57</name>
<organism>
    <name type="scientific">Escherichia coli O157:H7</name>
    <dbReference type="NCBI Taxonomy" id="83334"/>
    <lineage>
        <taxon>Bacteria</taxon>
        <taxon>Pseudomonadati</taxon>
        <taxon>Pseudomonadota</taxon>
        <taxon>Gammaproteobacteria</taxon>
        <taxon>Enterobacterales</taxon>
        <taxon>Enterobacteriaceae</taxon>
        <taxon>Escherichia</taxon>
    </lineage>
</organism>
<dbReference type="EC" id="1.1.1.17" evidence="2"/>
<dbReference type="EMBL" id="AE005174">
    <property type="protein sequence ID" value="AAG58744.1"/>
    <property type="molecule type" value="Genomic_DNA"/>
</dbReference>
<dbReference type="EMBL" id="BA000007">
    <property type="protein sequence ID" value="BAB37899.1"/>
    <property type="molecule type" value="Genomic_DNA"/>
</dbReference>
<dbReference type="PIR" id="D86035">
    <property type="entry name" value="D86035"/>
</dbReference>
<dbReference type="PIR" id="D91188">
    <property type="entry name" value="D91188"/>
</dbReference>
<dbReference type="RefSeq" id="NP_312503.1">
    <property type="nucleotide sequence ID" value="NC_002695.1"/>
</dbReference>
<dbReference type="RefSeq" id="WP_000645404.1">
    <property type="nucleotide sequence ID" value="NZ_VOAI01000021.1"/>
</dbReference>
<dbReference type="SMR" id="Q8XDG9"/>
<dbReference type="STRING" id="155864.Z5024"/>
<dbReference type="GeneID" id="915582"/>
<dbReference type="KEGG" id="ece:Z5024"/>
<dbReference type="KEGG" id="ecs:ECs_4476"/>
<dbReference type="PATRIC" id="fig|386585.9.peg.4689"/>
<dbReference type="eggNOG" id="COG0246">
    <property type="taxonomic scope" value="Bacteria"/>
</dbReference>
<dbReference type="HOGENOM" id="CLU_036089_2_0_6"/>
<dbReference type="OMA" id="APFIERK"/>
<dbReference type="Proteomes" id="UP000000558">
    <property type="component" value="Chromosome"/>
</dbReference>
<dbReference type="Proteomes" id="UP000002519">
    <property type="component" value="Chromosome"/>
</dbReference>
<dbReference type="GO" id="GO:0005829">
    <property type="term" value="C:cytosol"/>
    <property type="evidence" value="ECO:0007669"/>
    <property type="project" value="TreeGrafter"/>
</dbReference>
<dbReference type="GO" id="GO:0008926">
    <property type="term" value="F:mannitol-1-phosphate 5-dehydrogenase activity"/>
    <property type="evidence" value="ECO:0007669"/>
    <property type="project" value="UniProtKB-UniRule"/>
</dbReference>
<dbReference type="GO" id="GO:0019592">
    <property type="term" value="P:mannitol catabolic process"/>
    <property type="evidence" value="ECO:0007669"/>
    <property type="project" value="TreeGrafter"/>
</dbReference>
<dbReference type="FunFam" id="1.10.1040.10:FF:000009">
    <property type="entry name" value="Mannitol-1-phosphate 5-dehydrogenase"/>
    <property type="match status" value="1"/>
</dbReference>
<dbReference type="FunFam" id="3.40.50.720:FF:000075">
    <property type="entry name" value="Mannitol-1-phosphate 5-dehydrogenase"/>
    <property type="match status" value="1"/>
</dbReference>
<dbReference type="Gene3D" id="1.10.1040.10">
    <property type="entry name" value="N-(1-d-carboxylethyl)-l-norvaline Dehydrogenase, domain 2"/>
    <property type="match status" value="1"/>
</dbReference>
<dbReference type="Gene3D" id="3.40.50.720">
    <property type="entry name" value="NAD(P)-binding Rossmann-like Domain"/>
    <property type="match status" value="1"/>
</dbReference>
<dbReference type="HAMAP" id="MF_00196">
    <property type="entry name" value="Mannitol_dehydrog"/>
    <property type="match status" value="1"/>
</dbReference>
<dbReference type="InterPro" id="IPR008927">
    <property type="entry name" value="6-PGluconate_DH-like_C_sf"/>
</dbReference>
<dbReference type="InterPro" id="IPR013328">
    <property type="entry name" value="6PGD_dom2"/>
</dbReference>
<dbReference type="InterPro" id="IPR023028">
    <property type="entry name" value="Mannitol_1_phos_5_DH"/>
</dbReference>
<dbReference type="InterPro" id="IPR000669">
    <property type="entry name" value="Mannitol_DH"/>
</dbReference>
<dbReference type="InterPro" id="IPR013118">
    <property type="entry name" value="Mannitol_DH_C"/>
</dbReference>
<dbReference type="InterPro" id="IPR023027">
    <property type="entry name" value="Mannitol_DH_CS"/>
</dbReference>
<dbReference type="InterPro" id="IPR013131">
    <property type="entry name" value="Mannitol_DH_N"/>
</dbReference>
<dbReference type="InterPro" id="IPR036291">
    <property type="entry name" value="NAD(P)-bd_dom_sf"/>
</dbReference>
<dbReference type="NCBIfam" id="NF002646">
    <property type="entry name" value="PRK02318.1-2"/>
    <property type="match status" value="1"/>
</dbReference>
<dbReference type="NCBIfam" id="NF002647">
    <property type="entry name" value="PRK02318.1-3"/>
    <property type="match status" value="1"/>
</dbReference>
<dbReference type="NCBIfam" id="NF002648">
    <property type="entry name" value="PRK02318.1-4"/>
    <property type="match status" value="1"/>
</dbReference>
<dbReference type="NCBIfam" id="NF002650">
    <property type="entry name" value="PRK02318.2-2"/>
    <property type="match status" value="1"/>
</dbReference>
<dbReference type="NCBIfam" id="NF002652">
    <property type="entry name" value="PRK02318.2-5"/>
    <property type="match status" value="1"/>
</dbReference>
<dbReference type="PANTHER" id="PTHR30524:SF0">
    <property type="entry name" value="ALTRONATE OXIDOREDUCTASE-RELATED"/>
    <property type="match status" value="1"/>
</dbReference>
<dbReference type="PANTHER" id="PTHR30524">
    <property type="entry name" value="MANNITOL-1-PHOSPHATE 5-DEHYDROGENASE"/>
    <property type="match status" value="1"/>
</dbReference>
<dbReference type="Pfam" id="PF01232">
    <property type="entry name" value="Mannitol_dh"/>
    <property type="match status" value="1"/>
</dbReference>
<dbReference type="Pfam" id="PF08125">
    <property type="entry name" value="Mannitol_dh_C"/>
    <property type="match status" value="1"/>
</dbReference>
<dbReference type="PRINTS" id="PR00084">
    <property type="entry name" value="MTLDHDRGNASE"/>
</dbReference>
<dbReference type="SUPFAM" id="SSF48179">
    <property type="entry name" value="6-phosphogluconate dehydrogenase C-terminal domain-like"/>
    <property type="match status" value="1"/>
</dbReference>
<dbReference type="SUPFAM" id="SSF51735">
    <property type="entry name" value="NAD(P)-binding Rossmann-fold domains"/>
    <property type="match status" value="1"/>
</dbReference>
<dbReference type="PROSITE" id="PS00974">
    <property type="entry name" value="MANNITOL_DHGENASE"/>
    <property type="match status" value="1"/>
</dbReference>
<sequence>MKALHFGAGNIGRGFIGKLLADAGIQLTFADVNQVVLDALNARHSYQVHVVGETEQVDTVSGVDAVSSIGDDVVDLIAQVDLVTTAVGPVVLERIAPAIAKGLVKRKEQGNESPLNIIACENMVRGTTQLKGHVMNALPEDAKAWVEEHVGFVDSAVDRIVPPSASATNDPLEVTVETFSEWIVDKTQFKGALPNIPGMELTDNLMAFVERKLFTLNTGHAITAYLGKLAGHQTIRDAILDEKIRAVVKGAMEESGAVLIKRYGFDADKHAAYIQKILGRFENPYLKDDVERVGRQPLRKLSAGDRLIKPLLGTLEYSLPHKNLIQGIAGAMHFRSEDDPQAQELAALIADKGPQAALAQISDLDANSEVVSEAVTAYKAMQ</sequence>
<reference key="1">
    <citation type="journal article" date="2001" name="Nature">
        <title>Genome sequence of enterohaemorrhagic Escherichia coli O157:H7.</title>
        <authorList>
            <person name="Perna N.T."/>
            <person name="Plunkett G. III"/>
            <person name="Burland V."/>
            <person name="Mau B."/>
            <person name="Glasner J.D."/>
            <person name="Rose D.J."/>
            <person name="Mayhew G.F."/>
            <person name="Evans P.S."/>
            <person name="Gregor J."/>
            <person name="Kirkpatrick H.A."/>
            <person name="Posfai G."/>
            <person name="Hackett J."/>
            <person name="Klink S."/>
            <person name="Boutin A."/>
            <person name="Shao Y."/>
            <person name="Miller L."/>
            <person name="Grotbeck E.J."/>
            <person name="Davis N.W."/>
            <person name="Lim A."/>
            <person name="Dimalanta E.T."/>
            <person name="Potamousis K."/>
            <person name="Apodaca J."/>
            <person name="Anantharaman T.S."/>
            <person name="Lin J."/>
            <person name="Yen G."/>
            <person name="Schwartz D.C."/>
            <person name="Welch R.A."/>
            <person name="Blattner F.R."/>
        </authorList>
    </citation>
    <scope>NUCLEOTIDE SEQUENCE [LARGE SCALE GENOMIC DNA]</scope>
    <source>
        <strain>O157:H7 / EDL933 / ATCC 700927 / EHEC</strain>
    </source>
</reference>
<reference key="2">
    <citation type="journal article" date="2001" name="DNA Res.">
        <title>Complete genome sequence of enterohemorrhagic Escherichia coli O157:H7 and genomic comparison with a laboratory strain K-12.</title>
        <authorList>
            <person name="Hayashi T."/>
            <person name="Makino K."/>
            <person name="Ohnishi M."/>
            <person name="Kurokawa K."/>
            <person name="Ishii K."/>
            <person name="Yokoyama K."/>
            <person name="Han C.-G."/>
            <person name="Ohtsubo E."/>
            <person name="Nakayama K."/>
            <person name="Murata T."/>
            <person name="Tanaka M."/>
            <person name="Tobe T."/>
            <person name="Iida T."/>
            <person name="Takami H."/>
            <person name="Honda T."/>
            <person name="Sasakawa C."/>
            <person name="Ogasawara N."/>
            <person name="Yasunaga T."/>
            <person name="Kuhara S."/>
            <person name="Shiba T."/>
            <person name="Hattori M."/>
            <person name="Shinagawa H."/>
        </authorList>
    </citation>
    <scope>NUCLEOTIDE SEQUENCE [LARGE SCALE GENOMIC DNA]</scope>
    <source>
        <strain>O157:H7 / Sakai / RIMD 0509952 / EHEC</strain>
    </source>
</reference>
<accession>Q8XDG9</accession>